<evidence type="ECO:0000250" key="1">
    <source>
        <dbReference type="UniProtKB" id="O48814"/>
    </source>
</evidence>
<evidence type="ECO:0000255" key="2"/>
<evidence type="ECO:0000255" key="3">
    <source>
        <dbReference type="PROSITE-ProRule" id="PRU00159"/>
    </source>
</evidence>
<evidence type="ECO:0000255" key="4">
    <source>
        <dbReference type="PROSITE-ProRule" id="PRU10027"/>
    </source>
</evidence>
<evidence type="ECO:0000305" key="5"/>
<reference key="1">
    <citation type="journal article" date="2000" name="DNA Res.">
        <title>Structural analysis of Arabidopsis thaliana chromosome 3. I. Sequence features of the regions of 4,504,864 bp covered by sixty P1 and TAC clones.</title>
        <authorList>
            <person name="Sato S."/>
            <person name="Nakamura Y."/>
            <person name="Kaneko T."/>
            <person name="Katoh T."/>
            <person name="Asamizu E."/>
            <person name="Tabata S."/>
        </authorList>
    </citation>
    <scope>NUCLEOTIDE SEQUENCE [LARGE SCALE GENOMIC DNA]</scope>
    <source>
        <strain>cv. Columbia</strain>
    </source>
</reference>
<reference key="2">
    <citation type="journal article" date="2017" name="Plant J.">
        <title>Araport11: a complete reannotation of the Arabidopsis thaliana reference genome.</title>
        <authorList>
            <person name="Cheng C.Y."/>
            <person name="Krishnakumar V."/>
            <person name="Chan A.P."/>
            <person name="Thibaud-Nissen F."/>
            <person name="Schobel S."/>
            <person name="Town C.D."/>
        </authorList>
    </citation>
    <scope>GENOME REANNOTATION</scope>
    <source>
        <strain>cv. Columbia</strain>
    </source>
</reference>
<reference key="3">
    <citation type="journal article" date="2002" name="Plant Physiol.">
        <title>The cell wall-associated kinase (WAK) and WAK-like kinase gene family.</title>
        <authorList>
            <person name="Verica J.A."/>
            <person name="He Z.-H."/>
        </authorList>
    </citation>
    <scope>GENE FAMILY ORGANIZATION</scope>
</reference>
<comment type="function">
    <text>Putative serine/threonine-protein kinase that may function as a signaling receptor of extracellular matrix component.</text>
</comment>
<comment type="catalytic activity">
    <reaction>
        <text>L-seryl-[protein] + ATP = O-phospho-L-seryl-[protein] + ADP + H(+)</text>
        <dbReference type="Rhea" id="RHEA:17989"/>
        <dbReference type="Rhea" id="RHEA-COMP:9863"/>
        <dbReference type="Rhea" id="RHEA-COMP:11604"/>
        <dbReference type="ChEBI" id="CHEBI:15378"/>
        <dbReference type="ChEBI" id="CHEBI:29999"/>
        <dbReference type="ChEBI" id="CHEBI:30616"/>
        <dbReference type="ChEBI" id="CHEBI:83421"/>
        <dbReference type="ChEBI" id="CHEBI:456216"/>
    </reaction>
</comment>
<comment type="catalytic activity">
    <reaction>
        <text>L-threonyl-[protein] + ATP = O-phospho-L-threonyl-[protein] + ADP + H(+)</text>
        <dbReference type="Rhea" id="RHEA:46608"/>
        <dbReference type="Rhea" id="RHEA-COMP:11060"/>
        <dbReference type="Rhea" id="RHEA-COMP:11605"/>
        <dbReference type="ChEBI" id="CHEBI:15378"/>
        <dbReference type="ChEBI" id="CHEBI:30013"/>
        <dbReference type="ChEBI" id="CHEBI:30616"/>
        <dbReference type="ChEBI" id="CHEBI:61977"/>
        <dbReference type="ChEBI" id="CHEBI:456216"/>
    </reaction>
</comment>
<comment type="subcellular location">
    <subcellularLocation>
        <location evidence="5">Membrane</location>
        <topology evidence="5">Single-pass type I membrane protein</topology>
    </subcellularLocation>
</comment>
<comment type="similarity">
    <text evidence="3">Belongs to the protein kinase superfamily. Ser/Thr protein kinase family.</text>
</comment>
<name>WAKLS_ARATH</name>
<sequence>MKLQHVVYLVAIFFVVAIFVIACIEENKYLVWIMIILANTTNILSLVRSISYIKNIRKHQKDTKIQRQLFFEKNGGGMLIERLSGAGSSNIDFKIFTEEDMKEATNGYDVSRILGQGGQWTVYKGILPDNSIVAIKKTRLGDNNQVEQFINEVLVLSQINHRNVVKLLGCCLETEVPLLVYEFITGGSLFDHLHGSMFVSSLTWEHRLEIAIEVAGAIAYLHSGASIPIIHRDIKTENILLDENLTAKVADFGASKLKPMDKEQLTTMVQGTLGYLDPEYYTTWLLNEKSDVYSFGVVLMELISGQKALCFERPETSKHLVSYFVLATKENRLHEIIDDQVLNEENQREIHEAARVAVECTRLKGEERPRMIEVAAELETLRAKTTKHNWLDQYPEENVHLLGSNIVSAQGHTSSRGYDNNKNVARFDIEAGR</sequence>
<organism>
    <name type="scientific">Arabidopsis thaliana</name>
    <name type="common">Mouse-ear cress</name>
    <dbReference type="NCBI Taxonomy" id="3702"/>
    <lineage>
        <taxon>Eukaryota</taxon>
        <taxon>Viridiplantae</taxon>
        <taxon>Streptophyta</taxon>
        <taxon>Embryophyta</taxon>
        <taxon>Tracheophyta</taxon>
        <taxon>Spermatophyta</taxon>
        <taxon>Magnoliopsida</taxon>
        <taxon>eudicotyledons</taxon>
        <taxon>Gunneridae</taxon>
        <taxon>Pentapetalae</taxon>
        <taxon>rosids</taxon>
        <taxon>malvids</taxon>
        <taxon>Brassicales</taxon>
        <taxon>Brassicaceae</taxon>
        <taxon>Camelineae</taxon>
        <taxon>Arabidopsis</taxon>
    </lineage>
</organism>
<proteinExistence type="inferred from homology"/>
<accession>Q9LSV3</accession>
<keyword id="KW-0067">ATP-binding</keyword>
<keyword id="KW-0418">Kinase</keyword>
<keyword id="KW-0472">Membrane</keyword>
<keyword id="KW-0547">Nucleotide-binding</keyword>
<keyword id="KW-0597">Phosphoprotein</keyword>
<keyword id="KW-1185">Reference proteome</keyword>
<keyword id="KW-0723">Serine/threonine-protein kinase</keyword>
<keyword id="KW-0732">Signal</keyword>
<keyword id="KW-0808">Transferase</keyword>
<keyword id="KW-0812">Transmembrane</keyword>
<keyword id="KW-1133">Transmembrane helix</keyword>
<dbReference type="EC" id="2.7.11.-"/>
<dbReference type="EMBL" id="AB025639">
    <property type="protein sequence ID" value="BAB01318.1"/>
    <property type="molecule type" value="Genomic_DNA"/>
</dbReference>
<dbReference type="EMBL" id="CP002686">
    <property type="protein sequence ID" value="AEE77016.1"/>
    <property type="molecule type" value="Genomic_DNA"/>
</dbReference>
<dbReference type="RefSeq" id="NP_189176.1">
    <property type="nucleotide sequence ID" value="NM_113445.2"/>
</dbReference>
<dbReference type="SMR" id="Q9LSV3"/>
<dbReference type="STRING" id="3702.Q9LSV3"/>
<dbReference type="PaxDb" id="3702-AT3G25490.1"/>
<dbReference type="ProteomicsDB" id="242688"/>
<dbReference type="EnsemblPlants" id="AT3G25490.1">
    <property type="protein sequence ID" value="AT3G25490.1"/>
    <property type="gene ID" value="AT3G25490"/>
</dbReference>
<dbReference type="GeneID" id="822134"/>
<dbReference type="Gramene" id="AT3G25490.1">
    <property type="protein sequence ID" value="AT3G25490.1"/>
    <property type="gene ID" value="AT3G25490"/>
</dbReference>
<dbReference type="KEGG" id="ath:AT3G25490"/>
<dbReference type="Araport" id="AT3G25490"/>
<dbReference type="TAIR" id="AT3G25490"/>
<dbReference type="eggNOG" id="KOG1187">
    <property type="taxonomic scope" value="Eukaryota"/>
</dbReference>
<dbReference type="HOGENOM" id="CLU_000288_21_4_1"/>
<dbReference type="InParanoid" id="Q9LSV3"/>
<dbReference type="OMA" id="FSYMASE"/>
<dbReference type="PhylomeDB" id="Q9LSV3"/>
<dbReference type="PRO" id="PR:Q9LSV3"/>
<dbReference type="Proteomes" id="UP000006548">
    <property type="component" value="Chromosome 3"/>
</dbReference>
<dbReference type="ExpressionAtlas" id="Q9LSV3">
    <property type="expression patterns" value="differential"/>
</dbReference>
<dbReference type="GO" id="GO:0016020">
    <property type="term" value="C:membrane"/>
    <property type="evidence" value="ECO:0007669"/>
    <property type="project" value="UniProtKB-SubCell"/>
</dbReference>
<dbReference type="GO" id="GO:0005524">
    <property type="term" value="F:ATP binding"/>
    <property type="evidence" value="ECO:0007669"/>
    <property type="project" value="UniProtKB-KW"/>
</dbReference>
<dbReference type="GO" id="GO:0106310">
    <property type="term" value="F:protein serine kinase activity"/>
    <property type="evidence" value="ECO:0007669"/>
    <property type="project" value="RHEA"/>
</dbReference>
<dbReference type="GO" id="GO:0004674">
    <property type="term" value="F:protein serine/threonine kinase activity"/>
    <property type="evidence" value="ECO:0007669"/>
    <property type="project" value="UniProtKB-KW"/>
</dbReference>
<dbReference type="GO" id="GO:0007166">
    <property type="term" value="P:cell surface receptor signaling pathway"/>
    <property type="evidence" value="ECO:0007669"/>
    <property type="project" value="InterPro"/>
</dbReference>
<dbReference type="CDD" id="cd14066">
    <property type="entry name" value="STKc_IRAK"/>
    <property type="match status" value="1"/>
</dbReference>
<dbReference type="FunFam" id="1.10.510.10:FF:000084">
    <property type="entry name" value="Wall-associated receptor kinase 2"/>
    <property type="match status" value="1"/>
</dbReference>
<dbReference type="FunFam" id="3.30.200.20:FF:000043">
    <property type="entry name" value="Wall-associated receptor kinase 2"/>
    <property type="match status" value="1"/>
</dbReference>
<dbReference type="Gene3D" id="3.30.200.20">
    <property type="entry name" value="Phosphorylase Kinase, domain 1"/>
    <property type="match status" value="1"/>
</dbReference>
<dbReference type="Gene3D" id="1.10.510.10">
    <property type="entry name" value="Transferase(Phosphotransferase) domain 1"/>
    <property type="match status" value="1"/>
</dbReference>
<dbReference type="InterPro" id="IPR011009">
    <property type="entry name" value="Kinase-like_dom_sf"/>
</dbReference>
<dbReference type="InterPro" id="IPR000719">
    <property type="entry name" value="Prot_kinase_dom"/>
</dbReference>
<dbReference type="InterPro" id="IPR001245">
    <property type="entry name" value="Ser-Thr/Tyr_kinase_cat_dom"/>
</dbReference>
<dbReference type="InterPro" id="IPR008271">
    <property type="entry name" value="Ser/Thr_kinase_AS"/>
</dbReference>
<dbReference type="InterPro" id="IPR045274">
    <property type="entry name" value="WAK-like"/>
</dbReference>
<dbReference type="PANTHER" id="PTHR27005:SF511">
    <property type="entry name" value="WALL-ASSOCIATED RECEPTOR KINASE 1-RELATED"/>
    <property type="match status" value="1"/>
</dbReference>
<dbReference type="PANTHER" id="PTHR27005">
    <property type="entry name" value="WALL-ASSOCIATED RECEPTOR KINASE-LIKE 21"/>
    <property type="match status" value="1"/>
</dbReference>
<dbReference type="Pfam" id="PF07714">
    <property type="entry name" value="PK_Tyr_Ser-Thr"/>
    <property type="match status" value="1"/>
</dbReference>
<dbReference type="SMART" id="SM00220">
    <property type="entry name" value="S_TKc"/>
    <property type="match status" value="1"/>
</dbReference>
<dbReference type="SUPFAM" id="SSF56112">
    <property type="entry name" value="Protein kinase-like (PK-like)"/>
    <property type="match status" value="1"/>
</dbReference>
<dbReference type="PROSITE" id="PS50011">
    <property type="entry name" value="PROTEIN_KINASE_DOM"/>
    <property type="match status" value="1"/>
</dbReference>
<dbReference type="PROSITE" id="PS00108">
    <property type="entry name" value="PROTEIN_KINASE_ST"/>
    <property type="match status" value="1"/>
</dbReference>
<feature type="signal peptide" evidence="2">
    <location>
        <begin position="1"/>
        <end position="22"/>
    </location>
</feature>
<feature type="chain" id="PRO_0000253323" description="Putative wall-associated receptor kinase-like 16">
    <location>
        <begin position="23"/>
        <end position="433"/>
    </location>
</feature>
<feature type="topological domain" description="Extracellular" evidence="2">
    <location>
        <begin position="23"/>
        <end position="29"/>
    </location>
</feature>
<feature type="transmembrane region" description="Helical" evidence="2">
    <location>
        <begin position="30"/>
        <end position="50"/>
    </location>
</feature>
<feature type="topological domain" description="Cytoplasmic" evidence="2">
    <location>
        <begin position="51"/>
        <end position="433"/>
    </location>
</feature>
<feature type="domain" description="Protein kinase" evidence="3">
    <location>
        <begin position="108"/>
        <end position="391"/>
    </location>
</feature>
<feature type="active site" description="Proton acceptor" evidence="3 4">
    <location>
        <position position="233"/>
    </location>
</feature>
<feature type="binding site" evidence="3">
    <location>
        <begin position="114"/>
        <end position="122"/>
    </location>
    <ligand>
        <name>ATP</name>
        <dbReference type="ChEBI" id="CHEBI:30616"/>
    </ligand>
</feature>
<feature type="binding site" evidence="3">
    <location>
        <position position="136"/>
    </location>
    <ligand>
        <name>ATP</name>
        <dbReference type="ChEBI" id="CHEBI:30616"/>
    </ligand>
</feature>
<feature type="modified residue" description="Phosphothreonine" evidence="1">
    <location>
        <position position="97"/>
    </location>
</feature>
<feature type="modified residue" description="Phosphotyrosine" evidence="1">
    <location>
        <position position="181"/>
    </location>
</feature>
<feature type="modified residue" description="Phosphothreonine" evidence="1">
    <location>
        <position position="267"/>
    </location>
</feature>
<feature type="modified residue" description="Phosphothreonine" evidence="1">
    <location>
        <position position="272"/>
    </location>
</feature>
<feature type="modified residue" description="Phosphotyrosine" evidence="1">
    <location>
        <position position="280"/>
    </location>
</feature>
<protein>
    <recommendedName>
        <fullName>Putative wall-associated receptor kinase-like 16</fullName>
        <ecNumber>2.7.11.-</ecNumber>
    </recommendedName>
</protein>
<gene>
    <name type="primary">WAKL16</name>
    <name type="ordered locus">At3g25490</name>
    <name type="ORF">MWL2.11</name>
</gene>